<name>RS19_BACLD</name>
<organism>
    <name type="scientific">Bacillus licheniformis (strain ATCC 14580 / DSM 13 / JCM 2505 / CCUG 7422 / NBRC 12200 / NCIMB 9375 / NCTC 10341 / NRRL NRS-1264 / Gibson 46)</name>
    <dbReference type="NCBI Taxonomy" id="279010"/>
    <lineage>
        <taxon>Bacteria</taxon>
        <taxon>Bacillati</taxon>
        <taxon>Bacillota</taxon>
        <taxon>Bacilli</taxon>
        <taxon>Bacillales</taxon>
        <taxon>Bacillaceae</taxon>
        <taxon>Bacillus</taxon>
    </lineage>
</organism>
<reference key="1">
    <citation type="journal article" date="2004" name="J. Mol. Microbiol. Biotechnol.">
        <title>The complete genome sequence of Bacillus licheniformis DSM13, an organism with great industrial potential.</title>
        <authorList>
            <person name="Veith B."/>
            <person name="Herzberg C."/>
            <person name="Steckel S."/>
            <person name="Feesche J."/>
            <person name="Maurer K.H."/>
            <person name="Ehrenreich P."/>
            <person name="Baeumer S."/>
            <person name="Henne A."/>
            <person name="Liesegang H."/>
            <person name="Merkl R."/>
            <person name="Ehrenreich A."/>
            <person name="Gottschalk G."/>
        </authorList>
    </citation>
    <scope>NUCLEOTIDE SEQUENCE [LARGE SCALE GENOMIC DNA]</scope>
    <source>
        <strain>ATCC 14580 / DSM 13 / JCM 2505 / CCUG 7422 / NBRC 12200 / NCIMB 9375 / NCTC 10341 / NRRL NRS-1264 / Gibson 46</strain>
    </source>
</reference>
<reference key="2">
    <citation type="journal article" date="2004" name="Genome Biol.">
        <title>Complete genome sequence of the industrial bacterium Bacillus licheniformis and comparisons with closely related Bacillus species.</title>
        <authorList>
            <person name="Rey M.W."/>
            <person name="Ramaiya P."/>
            <person name="Nelson B.A."/>
            <person name="Brody-Karpin S.D."/>
            <person name="Zaretsky E.J."/>
            <person name="Tang M."/>
            <person name="Lopez de Leon A."/>
            <person name="Xiang H."/>
            <person name="Gusti V."/>
            <person name="Clausen I.G."/>
            <person name="Olsen P.B."/>
            <person name="Rasmussen M.D."/>
            <person name="Andersen J.T."/>
            <person name="Joergensen P.L."/>
            <person name="Larsen T.S."/>
            <person name="Sorokin A."/>
            <person name="Bolotin A."/>
            <person name="Lapidus A."/>
            <person name="Galleron N."/>
            <person name="Ehrlich S.D."/>
            <person name="Berka R.M."/>
        </authorList>
    </citation>
    <scope>NUCLEOTIDE SEQUENCE [LARGE SCALE GENOMIC DNA]</scope>
    <source>
        <strain>ATCC 14580 / DSM 13 / JCM 2505 / CCUG 7422 / NBRC 12200 / NCIMB 9375 / NCTC 10341 / NRRL NRS-1264 / Gibson 46</strain>
    </source>
</reference>
<gene>
    <name evidence="1" type="primary">rpsS</name>
    <name type="ordered locus">BLi00137</name>
    <name type="ordered locus">BL01048</name>
</gene>
<comment type="function">
    <text evidence="1">Protein S19 forms a complex with S13 that binds strongly to the 16S ribosomal RNA.</text>
</comment>
<comment type="similarity">
    <text evidence="1">Belongs to the universal ribosomal protein uS19 family.</text>
</comment>
<protein>
    <recommendedName>
        <fullName evidence="1">Small ribosomal subunit protein uS19</fullName>
    </recommendedName>
    <alternativeName>
        <fullName evidence="2">30S ribosomal protein S19</fullName>
    </alternativeName>
</protein>
<accession>Q65PA3</accession>
<accession>Q62ZP2</accession>
<feature type="chain" id="PRO_0000265327" description="Small ribosomal subunit protein uS19">
    <location>
        <begin position="1"/>
        <end position="92"/>
    </location>
</feature>
<keyword id="KW-1185">Reference proteome</keyword>
<keyword id="KW-0687">Ribonucleoprotein</keyword>
<keyword id="KW-0689">Ribosomal protein</keyword>
<keyword id="KW-0694">RNA-binding</keyword>
<keyword id="KW-0699">rRNA-binding</keyword>
<sequence length="92" mass="10627">MARSLKKGPFVDDHLMTKIEKLNEADKKQVVKTWSRRSTIFPQFIGHTIAVYDGRKHVPVYISEDMVGHKLGEFAPTRTYKGHASDDKKTRR</sequence>
<dbReference type="EMBL" id="AE017333">
    <property type="protein sequence ID" value="AAU39111.1"/>
    <property type="molecule type" value="Genomic_DNA"/>
</dbReference>
<dbReference type="EMBL" id="CP000002">
    <property type="protein sequence ID" value="AAU21766.1"/>
    <property type="molecule type" value="Genomic_DNA"/>
</dbReference>
<dbReference type="RefSeq" id="WP_003178334.1">
    <property type="nucleotide sequence ID" value="NC_006322.1"/>
</dbReference>
<dbReference type="SMR" id="Q65PA3"/>
<dbReference type="STRING" id="279010.BL01048"/>
<dbReference type="GeneID" id="92858899"/>
<dbReference type="KEGG" id="bld:BLi00137"/>
<dbReference type="KEGG" id="bli:BL01048"/>
<dbReference type="eggNOG" id="COG0185">
    <property type="taxonomic scope" value="Bacteria"/>
</dbReference>
<dbReference type="HOGENOM" id="CLU_144911_0_1_9"/>
<dbReference type="Proteomes" id="UP000000606">
    <property type="component" value="Chromosome"/>
</dbReference>
<dbReference type="GO" id="GO:0005737">
    <property type="term" value="C:cytoplasm"/>
    <property type="evidence" value="ECO:0007669"/>
    <property type="project" value="UniProtKB-ARBA"/>
</dbReference>
<dbReference type="GO" id="GO:0015935">
    <property type="term" value="C:small ribosomal subunit"/>
    <property type="evidence" value="ECO:0007669"/>
    <property type="project" value="InterPro"/>
</dbReference>
<dbReference type="GO" id="GO:0019843">
    <property type="term" value="F:rRNA binding"/>
    <property type="evidence" value="ECO:0007669"/>
    <property type="project" value="UniProtKB-UniRule"/>
</dbReference>
<dbReference type="GO" id="GO:0003735">
    <property type="term" value="F:structural constituent of ribosome"/>
    <property type="evidence" value="ECO:0007669"/>
    <property type="project" value="InterPro"/>
</dbReference>
<dbReference type="GO" id="GO:0000028">
    <property type="term" value="P:ribosomal small subunit assembly"/>
    <property type="evidence" value="ECO:0007669"/>
    <property type="project" value="TreeGrafter"/>
</dbReference>
<dbReference type="GO" id="GO:0006412">
    <property type="term" value="P:translation"/>
    <property type="evidence" value="ECO:0007669"/>
    <property type="project" value="UniProtKB-UniRule"/>
</dbReference>
<dbReference type="FunFam" id="3.30.860.10:FF:000001">
    <property type="entry name" value="30S ribosomal protein S19"/>
    <property type="match status" value="1"/>
</dbReference>
<dbReference type="Gene3D" id="3.30.860.10">
    <property type="entry name" value="30s Ribosomal Protein S19, Chain A"/>
    <property type="match status" value="1"/>
</dbReference>
<dbReference type="HAMAP" id="MF_00531">
    <property type="entry name" value="Ribosomal_uS19"/>
    <property type="match status" value="1"/>
</dbReference>
<dbReference type="InterPro" id="IPR002222">
    <property type="entry name" value="Ribosomal_uS19"/>
</dbReference>
<dbReference type="InterPro" id="IPR005732">
    <property type="entry name" value="Ribosomal_uS19_bac-type"/>
</dbReference>
<dbReference type="InterPro" id="IPR020934">
    <property type="entry name" value="Ribosomal_uS19_CS"/>
</dbReference>
<dbReference type="InterPro" id="IPR023575">
    <property type="entry name" value="Ribosomal_uS19_SF"/>
</dbReference>
<dbReference type="NCBIfam" id="TIGR01050">
    <property type="entry name" value="rpsS_bact"/>
    <property type="match status" value="1"/>
</dbReference>
<dbReference type="PANTHER" id="PTHR11880">
    <property type="entry name" value="RIBOSOMAL PROTEIN S19P FAMILY MEMBER"/>
    <property type="match status" value="1"/>
</dbReference>
<dbReference type="PANTHER" id="PTHR11880:SF8">
    <property type="entry name" value="SMALL RIBOSOMAL SUBUNIT PROTEIN US19M"/>
    <property type="match status" value="1"/>
</dbReference>
<dbReference type="Pfam" id="PF00203">
    <property type="entry name" value="Ribosomal_S19"/>
    <property type="match status" value="1"/>
</dbReference>
<dbReference type="PIRSF" id="PIRSF002144">
    <property type="entry name" value="Ribosomal_S19"/>
    <property type="match status" value="1"/>
</dbReference>
<dbReference type="PRINTS" id="PR00975">
    <property type="entry name" value="RIBOSOMALS19"/>
</dbReference>
<dbReference type="SUPFAM" id="SSF54570">
    <property type="entry name" value="Ribosomal protein S19"/>
    <property type="match status" value="1"/>
</dbReference>
<dbReference type="PROSITE" id="PS00323">
    <property type="entry name" value="RIBOSOMAL_S19"/>
    <property type="match status" value="1"/>
</dbReference>
<evidence type="ECO:0000255" key="1">
    <source>
        <dbReference type="HAMAP-Rule" id="MF_00531"/>
    </source>
</evidence>
<evidence type="ECO:0000305" key="2"/>
<proteinExistence type="inferred from homology"/>